<evidence type="ECO:0000250" key="1"/>
<evidence type="ECO:0000256" key="2">
    <source>
        <dbReference type="SAM" id="MobiDB-lite"/>
    </source>
</evidence>
<evidence type="ECO:0000305" key="3"/>
<dbReference type="EMBL" id="AY228468">
    <property type="protein sequence ID" value="AAO74014.2"/>
    <property type="molecule type" value="Genomic_DNA"/>
</dbReference>
<dbReference type="RefSeq" id="NP_817174.2">
    <property type="nucleotide sequence ID" value="NC_004677.2"/>
</dbReference>
<dbReference type="SMR" id="Q85X49"/>
<dbReference type="GeneID" id="5048514"/>
<dbReference type="GO" id="GO:0009507">
    <property type="term" value="C:chloroplast"/>
    <property type="evidence" value="ECO:0007669"/>
    <property type="project" value="UniProtKB-SubCell"/>
</dbReference>
<dbReference type="GO" id="GO:0015935">
    <property type="term" value="C:small ribosomal subunit"/>
    <property type="evidence" value="ECO:0007669"/>
    <property type="project" value="InterPro"/>
</dbReference>
<dbReference type="GO" id="GO:0019843">
    <property type="term" value="F:rRNA binding"/>
    <property type="evidence" value="ECO:0007669"/>
    <property type="project" value="UniProtKB-UniRule"/>
</dbReference>
<dbReference type="GO" id="GO:0003735">
    <property type="term" value="F:structural constituent of ribosome"/>
    <property type="evidence" value="ECO:0007669"/>
    <property type="project" value="InterPro"/>
</dbReference>
<dbReference type="GO" id="GO:0006412">
    <property type="term" value="P:translation"/>
    <property type="evidence" value="ECO:0007669"/>
    <property type="project" value="UniProtKB-UniRule"/>
</dbReference>
<dbReference type="CDD" id="cd03368">
    <property type="entry name" value="Ribosomal_S12"/>
    <property type="match status" value="1"/>
</dbReference>
<dbReference type="FunFam" id="2.40.50.140:FF:000099">
    <property type="entry name" value="Ribosomal protein S12, mitochondrial"/>
    <property type="match status" value="1"/>
</dbReference>
<dbReference type="Gene3D" id="2.40.50.140">
    <property type="entry name" value="Nucleic acid-binding proteins"/>
    <property type="match status" value="1"/>
</dbReference>
<dbReference type="HAMAP" id="MF_00403_B">
    <property type="entry name" value="Ribosomal_uS12_B"/>
    <property type="match status" value="1"/>
</dbReference>
<dbReference type="InterPro" id="IPR012340">
    <property type="entry name" value="NA-bd_OB-fold"/>
</dbReference>
<dbReference type="InterPro" id="IPR006032">
    <property type="entry name" value="Ribosomal_uS12"/>
</dbReference>
<dbReference type="InterPro" id="IPR005679">
    <property type="entry name" value="Ribosomal_uS12_bac"/>
</dbReference>
<dbReference type="NCBIfam" id="TIGR00981">
    <property type="entry name" value="rpsL_bact"/>
    <property type="match status" value="1"/>
</dbReference>
<dbReference type="PANTHER" id="PTHR11652">
    <property type="entry name" value="30S RIBOSOMAL PROTEIN S12 FAMILY MEMBER"/>
    <property type="match status" value="1"/>
</dbReference>
<dbReference type="Pfam" id="PF00164">
    <property type="entry name" value="Ribosom_S12_S23"/>
    <property type="match status" value="1"/>
</dbReference>
<dbReference type="PIRSF" id="PIRSF002133">
    <property type="entry name" value="Ribosomal_S12/S23"/>
    <property type="match status" value="1"/>
</dbReference>
<dbReference type="PRINTS" id="PR01034">
    <property type="entry name" value="RIBOSOMALS12"/>
</dbReference>
<dbReference type="SUPFAM" id="SSF50249">
    <property type="entry name" value="Nucleic acid-binding proteins"/>
    <property type="match status" value="1"/>
</dbReference>
<dbReference type="PROSITE" id="PS00055">
    <property type="entry name" value="RIBOSOMAL_S12"/>
    <property type="match status" value="1"/>
</dbReference>
<keyword id="KW-0150">Chloroplast</keyword>
<keyword id="KW-0934">Plastid</keyword>
<keyword id="KW-0687">Ribonucleoprotein</keyword>
<keyword id="KW-0689">Ribosomal protein</keyword>
<keyword id="KW-0694">RNA-binding</keyword>
<keyword id="KW-0699">rRNA-binding</keyword>
<accession>Q85X49</accession>
<name>RR12_PINKO</name>
<protein>
    <recommendedName>
        <fullName evidence="3">Small ribosomal subunit protein uS12c</fullName>
    </recommendedName>
    <alternativeName>
        <fullName>30S ribosomal protein S12, chloroplastic</fullName>
    </alternativeName>
</protein>
<comment type="function">
    <text evidence="1">With S4 and S5 plays an important role in translational accuracy. Located at the interface of the 30S and 50S subunits (By similarity).</text>
</comment>
<comment type="subunit">
    <text evidence="1">Part of the 30S ribosomal subunit.</text>
</comment>
<comment type="subcellular location">
    <subcellularLocation>
        <location>Plastid</location>
        <location>Chloroplast</location>
    </subcellularLocation>
</comment>
<comment type="similarity">
    <text evidence="3">Belongs to the universal ribosomal protein uS12 family.</text>
</comment>
<sequence>MPTIQQLIRNARQPIENRKKSPALRGCPQRRGTITPKKPNSALRKVARVRLTSGFEITAYIPGIDHNLQEHSVVLVRGGRVKDLPGVRYHIVRGTLDAAEVKDRQQGRSKYGVKKPK</sequence>
<organism>
    <name type="scientific">Pinus koraiensis</name>
    <name type="common">Korean pine</name>
    <dbReference type="NCBI Taxonomy" id="88728"/>
    <lineage>
        <taxon>Eukaryota</taxon>
        <taxon>Viridiplantae</taxon>
        <taxon>Streptophyta</taxon>
        <taxon>Embryophyta</taxon>
        <taxon>Tracheophyta</taxon>
        <taxon>Spermatophyta</taxon>
        <taxon>Pinopsida</taxon>
        <taxon>Pinidae</taxon>
        <taxon>Conifers I</taxon>
        <taxon>Pinales</taxon>
        <taxon>Pinaceae</taxon>
        <taxon>Pinus</taxon>
        <taxon>Pinus subgen. Strobus</taxon>
    </lineage>
</organism>
<feature type="chain" id="PRO_0000146419" description="Small ribosomal subunit protein uS12c">
    <location>
        <begin position="1"/>
        <end position="117"/>
    </location>
</feature>
<feature type="region of interest" description="Disordered" evidence="2">
    <location>
        <begin position="9"/>
        <end position="40"/>
    </location>
</feature>
<gene>
    <name type="primary">rps12</name>
</gene>
<geneLocation type="chloroplast"/>
<proteinExistence type="inferred from homology"/>
<reference key="1">
    <citation type="submission" date="2003-02" db="EMBL/GenBank/DDBJ databases">
        <title>Complete nucleotide sequence of Pinus koraiensis.</title>
        <authorList>
            <person name="Noh E.W."/>
            <person name="Lee J.S."/>
            <person name="Choi Y.I."/>
            <person name="Han M.S."/>
            <person name="Yi Y.S."/>
            <person name="Han S.U."/>
        </authorList>
    </citation>
    <scope>NUCLEOTIDE SEQUENCE [LARGE SCALE GENOMIC DNA]</scope>
    <source>
        <strain>KangWon16</strain>
    </source>
</reference>